<proteinExistence type="inferred from homology"/>
<feature type="chain" id="PRO_0000362453" description="ATP synthase subunit a">
    <location>
        <begin position="1"/>
        <end position="276"/>
    </location>
</feature>
<feature type="transmembrane region" description="Helical" evidence="1">
    <location>
        <begin position="47"/>
        <end position="67"/>
    </location>
</feature>
<feature type="transmembrane region" description="Helical" evidence="1">
    <location>
        <begin position="107"/>
        <end position="127"/>
    </location>
</feature>
<feature type="transmembrane region" description="Helical" evidence="1">
    <location>
        <begin position="152"/>
        <end position="172"/>
    </location>
</feature>
<feature type="transmembrane region" description="Helical" evidence="1">
    <location>
        <begin position="188"/>
        <end position="208"/>
    </location>
</feature>
<feature type="transmembrane region" description="Helical" evidence="1">
    <location>
        <begin position="226"/>
        <end position="246"/>
    </location>
</feature>
<feature type="transmembrane region" description="Helical" evidence="1">
    <location>
        <begin position="247"/>
        <end position="267"/>
    </location>
</feature>
<comment type="function">
    <text evidence="1">Key component of the proton channel; it plays a direct role in the translocation of protons across the membrane.</text>
</comment>
<comment type="subunit">
    <text evidence="1">F-type ATPases have 2 components, CF(1) - the catalytic core - and CF(0) - the membrane proton channel. CF(1) has five subunits: alpha(3), beta(3), gamma(1), delta(1), epsilon(1). CF(0) has three main subunits: a(1), b(2) and c(9-12). The alpha and beta chains form an alternating ring which encloses part of the gamma chain. CF(1) is attached to CF(0) by a central stalk formed by the gamma and epsilon chains, while a peripheral stalk is formed by the delta and b chains.</text>
</comment>
<comment type="subcellular location">
    <subcellularLocation>
        <location evidence="1">Cell inner membrane</location>
        <topology evidence="1">Multi-pass membrane protein</topology>
    </subcellularLocation>
</comment>
<comment type="similarity">
    <text evidence="1">Belongs to the ATPase A chain family.</text>
</comment>
<protein>
    <recommendedName>
        <fullName evidence="1">ATP synthase subunit a</fullName>
    </recommendedName>
    <alternativeName>
        <fullName evidence="1">ATP synthase F0 sector subunit a</fullName>
    </alternativeName>
    <alternativeName>
        <fullName evidence="1">F-ATPase subunit 6</fullName>
    </alternativeName>
</protein>
<name>ATP6_SHEHH</name>
<organism>
    <name type="scientific">Shewanella halifaxensis (strain HAW-EB4)</name>
    <dbReference type="NCBI Taxonomy" id="458817"/>
    <lineage>
        <taxon>Bacteria</taxon>
        <taxon>Pseudomonadati</taxon>
        <taxon>Pseudomonadota</taxon>
        <taxon>Gammaproteobacteria</taxon>
        <taxon>Alteromonadales</taxon>
        <taxon>Shewanellaceae</taxon>
        <taxon>Shewanella</taxon>
    </lineage>
</organism>
<reference key="1">
    <citation type="submission" date="2008-01" db="EMBL/GenBank/DDBJ databases">
        <title>Complete sequence of Shewanella halifaxensis HAW-EB4.</title>
        <authorList>
            <consortium name="US DOE Joint Genome Institute"/>
            <person name="Copeland A."/>
            <person name="Lucas S."/>
            <person name="Lapidus A."/>
            <person name="Glavina del Rio T."/>
            <person name="Dalin E."/>
            <person name="Tice H."/>
            <person name="Bruce D."/>
            <person name="Goodwin L."/>
            <person name="Pitluck S."/>
            <person name="Sims D."/>
            <person name="Brettin T."/>
            <person name="Detter J.C."/>
            <person name="Han C."/>
            <person name="Kuske C.R."/>
            <person name="Schmutz J."/>
            <person name="Larimer F."/>
            <person name="Land M."/>
            <person name="Hauser L."/>
            <person name="Kyrpides N."/>
            <person name="Kim E."/>
            <person name="Zhao J.-S."/>
            <person name="Richardson P."/>
        </authorList>
    </citation>
    <scope>NUCLEOTIDE SEQUENCE [LARGE SCALE GENOMIC DNA]</scope>
    <source>
        <strain>HAW-EB4</strain>
    </source>
</reference>
<keyword id="KW-0066">ATP synthesis</keyword>
<keyword id="KW-0997">Cell inner membrane</keyword>
<keyword id="KW-1003">Cell membrane</keyword>
<keyword id="KW-0138">CF(0)</keyword>
<keyword id="KW-0375">Hydrogen ion transport</keyword>
<keyword id="KW-0406">Ion transport</keyword>
<keyword id="KW-0472">Membrane</keyword>
<keyword id="KW-0812">Transmembrane</keyword>
<keyword id="KW-1133">Transmembrane helix</keyword>
<keyword id="KW-0813">Transport</keyword>
<accession>B0TQG0</accession>
<gene>
    <name evidence="1" type="primary">atpB</name>
    <name type="ordered locus">Shal_4300</name>
</gene>
<dbReference type="EMBL" id="CP000931">
    <property type="protein sequence ID" value="ABZ78840.1"/>
    <property type="molecule type" value="Genomic_DNA"/>
</dbReference>
<dbReference type="RefSeq" id="WP_012279343.1">
    <property type="nucleotide sequence ID" value="NC_010334.1"/>
</dbReference>
<dbReference type="SMR" id="B0TQG0"/>
<dbReference type="STRING" id="458817.Shal_4300"/>
<dbReference type="KEGG" id="shl:Shal_4300"/>
<dbReference type="eggNOG" id="COG0356">
    <property type="taxonomic scope" value="Bacteria"/>
</dbReference>
<dbReference type="HOGENOM" id="CLU_041018_1_0_6"/>
<dbReference type="OrthoDB" id="9789241at2"/>
<dbReference type="Proteomes" id="UP000001317">
    <property type="component" value="Chromosome"/>
</dbReference>
<dbReference type="GO" id="GO:0005886">
    <property type="term" value="C:plasma membrane"/>
    <property type="evidence" value="ECO:0007669"/>
    <property type="project" value="UniProtKB-SubCell"/>
</dbReference>
<dbReference type="GO" id="GO:0045259">
    <property type="term" value="C:proton-transporting ATP synthase complex"/>
    <property type="evidence" value="ECO:0007669"/>
    <property type="project" value="UniProtKB-KW"/>
</dbReference>
<dbReference type="GO" id="GO:0046933">
    <property type="term" value="F:proton-transporting ATP synthase activity, rotational mechanism"/>
    <property type="evidence" value="ECO:0007669"/>
    <property type="project" value="UniProtKB-UniRule"/>
</dbReference>
<dbReference type="GO" id="GO:0042777">
    <property type="term" value="P:proton motive force-driven plasma membrane ATP synthesis"/>
    <property type="evidence" value="ECO:0007669"/>
    <property type="project" value="TreeGrafter"/>
</dbReference>
<dbReference type="CDD" id="cd00310">
    <property type="entry name" value="ATP-synt_Fo_a_6"/>
    <property type="match status" value="1"/>
</dbReference>
<dbReference type="FunFam" id="1.20.120.220:FF:000002">
    <property type="entry name" value="ATP synthase subunit a"/>
    <property type="match status" value="1"/>
</dbReference>
<dbReference type="Gene3D" id="1.20.120.220">
    <property type="entry name" value="ATP synthase, F0 complex, subunit A"/>
    <property type="match status" value="1"/>
</dbReference>
<dbReference type="HAMAP" id="MF_01393">
    <property type="entry name" value="ATP_synth_a_bact"/>
    <property type="match status" value="1"/>
</dbReference>
<dbReference type="InterPro" id="IPR045082">
    <property type="entry name" value="ATP_syn_F0_a_bact/chloroplast"/>
</dbReference>
<dbReference type="InterPro" id="IPR000568">
    <property type="entry name" value="ATP_synth_F0_asu"/>
</dbReference>
<dbReference type="InterPro" id="IPR023011">
    <property type="entry name" value="ATP_synth_F0_asu_AS"/>
</dbReference>
<dbReference type="InterPro" id="IPR035908">
    <property type="entry name" value="F0_ATP_A_sf"/>
</dbReference>
<dbReference type="NCBIfam" id="TIGR01131">
    <property type="entry name" value="ATP_synt_6_or_A"/>
    <property type="match status" value="1"/>
</dbReference>
<dbReference type="NCBIfam" id="NF004477">
    <property type="entry name" value="PRK05815.1-1"/>
    <property type="match status" value="1"/>
</dbReference>
<dbReference type="PANTHER" id="PTHR42823">
    <property type="entry name" value="ATP SYNTHASE SUBUNIT A, CHLOROPLASTIC"/>
    <property type="match status" value="1"/>
</dbReference>
<dbReference type="PANTHER" id="PTHR42823:SF3">
    <property type="entry name" value="ATP SYNTHASE SUBUNIT A, CHLOROPLASTIC"/>
    <property type="match status" value="1"/>
</dbReference>
<dbReference type="Pfam" id="PF00119">
    <property type="entry name" value="ATP-synt_A"/>
    <property type="match status" value="1"/>
</dbReference>
<dbReference type="PRINTS" id="PR00123">
    <property type="entry name" value="ATPASEA"/>
</dbReference>
<dbReference type="SUPFAM" id="SSF81336">
    <property type="entry name" value="F1F0 ATP synthase subunit A"/>
    <property type="match status" value="1"/>
</dbReference>
<dbReference type="PROSITE" id="PS00449">
    <property type="entry name" value="ATPASE_A"/>
    <property type="match status" value="1"/>
</dbReference>
<sequence>MATTGDDTLTITASDYIQHHLTNAKMCSTDGGIAFNYACQDAGFWTWHIDSLLFSVGLGVLFLWLFYKVGQKATIGVPGKLQCFVEMCVEGVDKIVKDSFHGKNAVIAPLGLTIFVWVFLMNLMDLIPVDFVPEAAKRLLGVPYLKIVPTTDLNVTLGLALSVFVLIVFYSIKVKGFSGFTKELTMQPFNHWALIPINFVLETVTLIAKPISLSLRLFGNLYAGELIFILIALMPWWAQFALSVPWAIFHILVIVLQAFIFMMLTIVYLSMAHEDH</sequence>
<evidence type="ECO:0000255" key="1">
    <source>
        <dbReference type="HAMAP-Rule" id="MF_01393"/>
    </source>
</evidence>